<keyword id="KW-0963">Cytoplasm</keyword>
<keyword id="KW-0238">DNA-binding</keyword>
<keyword id="KW-0678">Repressor</keyword>
<keyword id="KW-0804">Transcription</keyword>
<keyword id="KW-0805">Transcription regulation</keyword>
<evidence type="ECO:0000255" key="1">
    <source>
        <dbReference type="HAMAP-Rule" id="MF_00621"/>
    </source>
</evidence>
<proteinExistence type="inferred from homology"/>
<comment type="function">
    <text evidence="1">DNA-binding global transcriptional regulator which is involved in the adaptive response to starvation and acts by directly or indirectly controlling the expression of numerous genes in response to nutrient availability. During rapid exponential growth, CodY is highly active and represses genes whose products allow adaptation to nutrient depletion.</text>
</comment>
<comment type="subcellular location">
    <subcellularLocation>
        <location evidence="1">Cytoplasm</location>
    </subcellularLocation>
</comment>
<comment type="similarity">
    <text evidence="1">Belongs to the CodY family.</text>
</comment>
<organism>
    <name type="scientific">Clostridium beijerinckii (strain ATCC 51743 / NCIMB 8052)</name>
    <name type="common">Clostridium acetobutylicum</name>
    <dbReference type="NCBI Taxonomy" id="290402"/>
    <lineage>
        <taxon>Bacteria</taxon>
        <taxon>Bacillati</taxon>
        <taxon>Bacillota</taxon>
        <taxon>Clostridia</taxon>
        <taxon>Eubacteriales</taxon>
        <taxon>Clostridiaceae</taxon>
        <taxon>Clostridium</taxon>
    </lineage>
</organism>
<protein>
    <recommendedName>
        <fullName evidence="1">Global transcriptional regulator CodY</fullName>
    </recommendedName>
</protein>
<accession>A6LSN9</accession>
<name>CODY_CLOB8</name>
<reference key="1">
    <citation type="submission" date="2007-06" db="EMBL/GenBank/DDBJ databases">
        <title>Complete sequence of Clostridium beijerinckii NCIMB 8052.</title>
        <authorList>
            <consortium name="US DOE Joint Genome Institute"/>
            <person name="Copeland A."/>
            <person name="Lucas S."/>
            <person name="Lapidus A."/>
            <person name="Barry K."/>
            <person name="Detter J.C."/>
            <person name="Glavina del Rio T."/>
            <person name="Hammon N."/>
            <person name="Israni S."/>
            <person name="Dalin E."/>
            <person name="Tice H."/>
            <person name="Pitluck S."/>
            <person name="Sims D."/>
            <person name="Brettin T."/>
            <person name="Bruce D."/>
            <person name="Tapia R."/>
            <person name="Brainard J."/>
            <person name="Schmutz J."/>
            <person name="Larimer F."/>
            <person name="Land M."/>
            <person name="Hauser L."/>
            <person name="Kyrpides N."/>
            <person name="Mikhailova N."/>
            <person name="Bennet G."/>
            <person name="Cann I."/>
            <person name="Chen J.-S."/>
            <person name="Contreras A.L."/>
            <person name="Jones D."/>
            <person name="Kashket E."/>
            <person name="Mitchell W."/>
            <person name="Stoddard S."/>
            <person name="Schwarz W."/>
            <person name="Qureshi N."/>
            <person name="Young M."/>
            <person name="Shi Z."/>
            <person name="Ezeji T."/>
            <person name="White B."/>
            <person name="Blaschek H."/>
            <person name="Richardson P."/>
        </authorList>
    </citation>
    <scope>NUCLEOTIDE SEQUENCE [LARGE SCALE GENOMIC DNA]</scope>
    <source>
        <strain>ATCC 51743 / NCIMB 8052</strain>
    </source>
</reference>
<sequence>MSSLLTKTRMLNKILQKSGTEPVAFQDICTLLSEVLECNVYIISKKGKVLGYTFGKDFECEAMKKKVIEDKKFPEDYNKTLLEVNETLSNLPNEGRCVFQEIGKCKKVDKLSTIVPIIGSRERLGTLILARFGNPFTDEDLVIVEYSATIVGMEMLRAMQDEITEDTRKKAVVQLAIGTLSYSELEAVEHIFDELNGNEGLLVASKIADKVGITRSVIVNALRKFESAGVIESRSLGMKGTYIRILNEKLIDELKKIK</sequence>
<feature type="chain" id="PRO_1000082586" description="Global transcriptional regulator CodY">
    <location>
        <begin position="1"/>
        <end position="258"/>
    </location>
</feature>
<feature type="DNA-binding region" description="H-T-H motif" evidence="1">
    <location>
        <begin position="204"/>
        <end position="223"/>
    </location>
</feature>
<feature type="region of interest" description="GAF domain" evidence="1">
    <location>
        <begin position="1"/>
        <end position="156"/>
    </location>
</feature>
<gene>
    <name evidence="1" type="primary">codY</name>
    <name type="ordered locus">Cbei_1187</name>
</gene>
<dbReference type="EMBL" id="CP000721">
    <property type="protein sequence ID" value="ABR33369.1"/>
    <property type="molecule type" value="Genomic_DNA"/>
</dbReference>
<dbReference type="RefSeq" id="WP_011968524.1">
    <property type="nucleotide sequence ID" value="NC_009617.1"/>
</dbReference>
<dbReference type="SMR" id="A6LSN9"/>
<dbReference type="GeneID" id="66344177"/>
<dbReference type="KEGG" id="cbe:Cbei_1187"/>
<dbReference type="eggNOG" id="COG4465">
    <property type="taxonomic scope" value="Bacteria"/>
</dbReference>
<dbReference type="HOGENOM" id="CLU_089581_0_0_9"/>
<dbReference type="Proteomes" id="UP000000565">
    <property type="component" value="Chromosome"/>
</dbReference>
<dbReference type="GO" id="GO:0005737">
    <property type="term" value="C:cytoplasm"/>
    <property type="evidence" value="ECO:0007669"/>
    <property type="project" value="UniProtKB-SubCell"/>
</dbReference>
<dbReference type="GO" id="GO:0003677">
    <property type="term" value="F:DNA binding"/>
    <property type="evidence" value="ECO:0007669"/>
    <property type="project" value="UniProtKB-UniRule"/>
</dbReference>
<dbReference type="GO" id="GO:0003700">
    <property type="term" value="F:DNA-binding transcription factor activity"/>
    <property type="evidence" value="ECO:0007669"/>
    <property type="project" value="InterPro"/>
</dbReference>
<dbReference type="GO" id="GO:0005525">
    <property type="term" value="F:GTP binding"/>
    <property type="evidence" value="ECO:0007669"/>
    <property type="project" value="InterPro"/>
</dbReference>
<dbReference type="GO" id="GO:0045892">
    <property type="term" value="P:negative regulation of DNA-templated transcription"/>
    <property type="evidence" value="ECO:0007669"/>
    <property type="project" value="UniProtKB-UniRule"/>
</dbReference>
<dbReference type="FunFam" id="1.10.10.10:FF:000034">
    <property type="entry name" value="GTP-sensing transcriptional pleiotropic repressor CodY"/>
    <property type="match status" value="1"/>
</dbReference>
<dbReference type="Gene3D" id="3.30.450.40">
    <property type="match status" value="1"/>
</dbReference>
<dbReference type="Gene3D" id="1.10.10.10">
    <property type="entry name" value="Winged helix-like DNA-binding domain superfamily/Winged helix DNA-binding domain"/>
    <property type="match status" value="1"/>
</dbReference>
<dbReference type="HAMAP" id="MF_00621">
    <property type="entry name" value="HTH_type_CodY"/>
    <property type="match status" value="1"/>
</dbReference>
<dbReference type="InterPro" id="IPR014154">
    <property type="entry name" value="CodY"/>
</dbReference>
<dbReference type="InterPro" id="IPR029016">
    <property type="entry name" value="GAF-like_dom_sf"/>
</dbReference>
<dbReference type="InterPro" id="IPR013198">
    <property type="entry name" value="GTP_trans_reg_CodY_C"/>
</dbReference>
<dbReference type="InterPro" id="IPR010312">
    <property type="entry name" value="Transc_reg_CodY_N"/>
</dbReference>
<dbReference type="InterPro" id="IPR036388">
    <property type="entry name" value="WH-like_DNA-bd_sf"/>
</dbReference>
<dbReference type="InterPro" id="IPR036390">
    <property type="entry name" value="WH_DNA-bd_sf"/>
</dbReference>
<dbReference type="NCBIfam" id="TIGR02787">
    <property type="entry name" value="codY_Gpos"/>
    <property type="match status" value="1"/>
</dbReference>
<dbReference type="NCBIfam" id="NF003170">
    <property type="entry name" value="PRK04158.1"/>
    <property type="match status" value="1"/>
</dbReference>
<dbReference type="PANTHER" id="PTHR40062:SF1">
    <property type="entry name" value="GLOBAL TRANSCRIPTIONAL REGULATOR CODY"/>
    <property type="match status" value="1"/>
</dbReference>
<dbReference type="PANTHER" id="PTHR40062">
    <property type="entry name" value="GTP-SENSING TRANSCRIPTIONAL PLEIOTROPIC REPRESSOR CODY"/>
    <property type="match status" value="1"/>
</dbReference>
<dbReference type="Pfam" id="PF06018">
    <property type="entry name" value="CodY"/>
    <property type="match status" value="1"/>
</dbReference>
<dbReference type="Pfam" id="PF08222">
    <property type="entry name" value="HTH_CodY"/>
    <property type="match status" value="1"/>
</dbReference>
<dbReference type="PIRSF" id="PIRSF011572">
    <property type="entry name" value="GTP_sensing_CodY"/>
    <property type="match status" value="1"/>
</dbReference>
<dbReference type="SUPFAM" id="SSF46785">
    <property type="entry name" value="Winged helix' DNA-binding domain"/>
    <property type="match status" value="1"/>
</dbReference>